<protein>
    <recommendedName>
        <fullName evidence="1">Glycerol-3-phosphate acyltransferase</fullName>
    </recommendedName>
    <alternativeName>
        <fullName evidence="1">Acyl-PO4 G3P acyltransferase</fullName>
    </alternativeName>
    <alternativeName>
        <fullName evidence="1">Acyl-phosphate--glycerol-3-phosphate acyltransferase</fullName>
    </alternativeName>
    <alternativeName>
        <fullName evidence="1">G3P acyltransferase</fullName>
        <shortName evidence="1">GPAT</shortName>
        <ecNumber evidence="1">2.3.1.275</ecNumber>
    </alternativeName>
    <alternativeName>
        <fullName evidence="1">Lysophosphatidic acid synthase</fullName>
        <shortName evidence="1">LPA synthase</shortName>
    </alternativeName>
</protein>
<proteinExistence type="inferred from homology"/>
<dbReference type="EC" id="2.3.1.275" evidence="1"/>
<dbReference type="EMBL" id="CP001321">
    <property type="protein sequence ID" value="ACL33073.1"/>
    <property type="molecule type" value="Genomic_DNA"/>
</dbReference>
<dbReference type="RefSeq" id="WP_010786420.1">
    <property type="nucleotide sequence ID" value="NC_011852.1"/>
</dbReference>
<dbReference type="SMR" id="B8F6X1"/>
<dbReference type="STRING" id="557723.HAPS_1517"/>
<dbReference type="KEGG" id="hap:HAPS_1517"/>
<dbReference type="PATRIC" id="fig|557723.8.peg.1489"/>
<dbReference type="HOGENOM" id="CLU_081254_0_2_6"/>
<dbReference type="UniPathway" id="UPA00085"/>
<dbReference type="Proteomes" id="UP000006743">
    <property type="component" value="Chromosome"/>
</dbReference>
<dbReference type="GO" id="GO:0005886">
    <property type="term" value="C:plasma membrane"/>
    <property type="evidence" value="ECO:0007669"/>
    <property type="project" value="UniProtKB-SubCell"/>
</dbReference>
<dbReference type="GO" id="GO:0043772">
    <property type="term" value="F:acyl-phosphate glycerol-3-phosphate acyltransferase activity"/>
    <property type="evidence" value="ECO:0007669"/>
    <property type="project" value="UniProtKB-UniRule"/>
</dbReference>
<dbReference type="GO" id="GO:0008654">
    <property type="term" value="P:phospholipid biosynthetic process"/>
    <property type="evidence" value="ECO:0007669"/>
    <property type="project" value="UniProtKB-UniRule"/>
</dbReference>
<dbReference type="HAMAP" id="MF_01043">
    <property type="entry name" value="PlsY"/>
    <property type="match status" value="1"/>
</dbReference>
<dbReference type="InterPro" id="IPR003811">
    <property type="entry name" value="G3P_acylTferase_PlsY"/>
</dbReference>
<dbReference type="NCBIfam" id="TIGR00023">
    <property type="entry name" value="glycerol-3-phosphate 1-O-acyltransferase PlsY"/>
    <property type="match status" value="1"/>
</dbReference>
<dbReference type="PANTHER" id="PTHR30309:SF0">
    <property type="entry name" value="GLYCEROL-3-PHOSPHATE ACYLTRANSFERASE-RELATED"/>
    <property type="match status" value="1"/>
</dbReference>
<dbReference type="PANTHER" id="PTHR30309">
    <property type="entry name" value="INNER MEMBRANE PROTEIN YGIH"/>
    <property type="match status" value="1"/>
</dbReference>
<dbReference type="Pfam" id="PF02660">
    <property type="entry name" value="G3P_acyltransf"/>
    <property type="match status" value="1"/>
</dbReference>
<dbReference type="SMART" id="SM01207">
    <property type="entry name" value="G3P_acyltransf"/>
    <property type="match status" value="1"/>
</dbReference>
<name>PLSY_GLAP5</name>
<accession>B8F6X1</accession>
<keyword id="KW-0997">Cell inner membrane</keyword>
<keyword id="KW-1003">Cell membrane</keyword>
<keyword id="KW-0444">Lipid biosynthesis</keyword>
<keyword id="KW-0443">Lipid metabolism</keyword>
<keyword id="KW-0472">Membrane</keyword>
<keyword id="KW-0594">Phospholipid biosynthesis</keyword>
<keyword id="KW-1208">Phospholipid metabolism</keyword>
<keyword id="KW-1185">Reference proteome</keyword>
<keyword id="KW-0808">Transferase</keyword>
<keyword id="KW-0812">Transmembrane</keyword>
<keyword id="KW-1133">Transmembrane helix</keyword>
<feature type="chain" id="PRO_1000149573" description="Glycerol-3-phosphate acyltransferase">
    <location>
        <begin position="1"/>
        <end position="203"/>
    </location>
</feature>
<feature type="transmembrane region" description="Helical" evidence="1">
    <location>
        <begin position="4"/>
        <end position="24"/>
    </location>
</feature>
<feature type="transmembrane region" description="Helical" evidence="1">
    <location>
        <begin position="56"/>
        <end position="76"/>
    </location>
</feature>
<feature type="transmembrane region" description="Helical" evidence="1">
    <location>
        <begin position="80"/>
        <end position="100"/>
    </location>
</feature>
<feature type="transmembrane region" description="Helical" evidence="1">
    <location>
        <begin position="115"/>
        <end position="135"/>
    </location>
</feature>
<feature type="transmembrane region" description="Helical" evidence="1">
    <location>
        <begin position="149"/>
        <end position="169"/>
    </location>
</feature>
<gene>
    <name evidence="1" type="primary">plsY</name>
    <name type="ordered locus">HAPS_1517</name>
</gene>
<reference key="1">
    <citation type="journal article" date="2009" name="J. Bacteriol.">
        <title>Complete genome sequence of Haemophilus parasuis SH0165.</title>
        <authorList>
            <person name="Yue M."/>
            <person name="Yang F."/>
            <person name="Yang J."/>
            <person name="Bei W."/>
            <person name="Cai X."/>
            <person name="Chen L."/>
            <person name="Dong J."/>
            <person name="Zhou R."/>
            <person name="Jin M."/>
            <person name="Jin Q."/>
            <person name="Chen H."/>
        </authorList>
    </citation>
    <scope>NUCLEOTIDE SEQUENCE [LARGE SCALE GENOMIC DNA]</scope>
    <source>
        <strain>SH0165</strain>
    </source>
</reference>
<evidence type="ECO:0000255" key="1">
    <source>
        <dbReference type="HAMAP-Rule" id="MF_01043"/>
    </source>
</evidence>
<organism>
    <name type="scientific">Glaesserella parasuis serovar 5 (strain SH0165)</name>
    <name type="common">Haemophilus parasuis</name>
    <dbReference type="NCBI Taxonomy" id="557723"/>
    <lineage>
        <taxon>Bacteria</taxon>
        <taxon>Pseudomonadati</taxon>
        <taxon>Pseudomonadota</taxon>
        <taxon>Gammaproteobacteria</taxon>
        <taxon>Pasteurellales</taxon>
        <taxon>Pasteurellaceae</taxon>
        <taxon>Glaesserella</taxon>
    </lineage>
</organism>
<comment type="function">
    <text evidence="1">Catalyzes the transfer of an acyl group from acyl-phosphate (acyl-PO(4)) to glycerol-3-phosphate (G3P) to form lysophosphatidic acid (LPA). This enzyme utilizes acyl-phosphate as fatty acyl donor, but not acyl-CoA or acyl-ACP.</text>
</comment>
<comment type="catalytic activity">
    <reaction evidence="1">
        <text>an acyl phosphate + sn-glycerol 3-phosphate = a 1-acyl-sn-glycero-3-phosphate + phosphate</text>
        <dbReference type="Rhea" id="RHEA:34075"/>
        <dbReference type="ChEBI" id="CHEBI:43474"/>
        <dbReference type="ChEBI" id="CHEBI:57597"/>
        <dbReference type="ChEBI" id="CHEBI:57970"/>
        <dbReference type="ChEBI" id="CHEBI:59918"/>
        <dbReference type="EC" id="2.3.1.275"/>
    </reaction>
</comment>
<comment type="pathway">
    <text evidence="1">Lipid metabolism; phospholipid metabolism.</text>
</comment>
<comment type="subunit">
    <text evidence="1">Probably interacts with PlsX.</text>
</comment>
<comment type="subcellular location">
    <subcellularLocation>
        <location evidence="1">Cell inner membrane</location>
        <topology evidence="1">Multi-pass membrane protein</topology>
    </subcellularLocation>
</comment>
<comment type="similarity">
    <text evidence="1">Belongs to the PlsY family.</text>
</comment>
<sequence length="203" mass="22029">MSVIAYLLILGAYLLGSISSAVIFCRLAGLPDPREHGSHNPGATNVLRIGGKLSALGVLMADILKGMLPVSLGFYLELPISVIGFIALAACLGHIFPVFFKFQGGKGVATAFGAIIPMGYSVAGLAVGTWLFVFLISGYSSLSAVITALIVPLYIWWFSSELTFPVALVCCLLVYRHHDNIQRLWRGQEDRGWKKKHSRQNGY</sequence>